<evidence type="ECO:0000305" key="1"/>
<name>Y543_RICFE</name>
<reference key="1">
    <citation type="journal article" date="2005" name="PLoS Biol.">
        <title>The genome sequence of Rickettsia felis identifies the first putative conjugative plasmid in an obligate intracellular parasite.</title>
        <authorList>
            <person name="Ogata H."/>
            <person name="Renesto P."/>
            <person name="Audic S."/>
            <person name="Robert C."/>
            <person name="Blanc G."/>
            <person name="Fournier P.-E."/>
            <person name="Parinello H."/>
            <person name="Claverie J.-M."/>
            <person name="Raoult D."/>
        </authorList>
    </citation>
    <scope>NUCLEOTIDE SEQUENCE [LARGE SCALE GENOMIC DNA]</scope>
    <source>
        <strain>ATCC VR-1525 / URRWXCal2</strain>
    </source>
</reference>
<proteinExistence type="inferred from homology"/>
<dbReference type="EC" id="2.4.-.-"/>
<dbReference type="EMBL" id="CP000053">
    <property type="protein sequence ID" value="AAY61394.1"/>
    <property type="molecule type" value="Genomic_DNA"/>
</dbReference>
<dbReference type="SMR" id="Q4UM29"/>
<dbReference type="STRING" id="315456.RF_0543"/>
<dbReference type="CAZy" id="GT2">
    <property type="family name" value="Glycosyltransferase Family 2"/>
</dbReference>
<dbReference type="KEGG" id="rfe:RF_0543"/>
<dbReference type="eggNOG" id="COG0463">
    <property type="taxonomic scope" value="Bacteria"/>
</dbReference>
<dbReference type="eggNOG" id="COG1216">
    <property type="taxonomic scope" value="Bacteria"/>
</dbReference>
<dbReference type="HOGENOM" id="CLU_473176_0_0_5"/>
<dbReference type="OrthoDB" id="6383742at2"/>
<dbReference type="Proteomes" id="UP000008548">
    <property type="component" value="Chromosome"/>
</dbReference>
<dbReference type="GO" id="GO:0016758">
    <property type="term" value="F:hexosyltransferase activity"/>
    <property type="evidence" value="ECO:0007669"/>
    <property type="project" value="UniProtKB-ARBA"/>
</dbReference>
<dbReference type="GO" id="GO:0009058">
    <property type="term" value="P:biosynthetic process"/>
    <property type="evidence" value="ECO:0007669"/>
    <property type="project" value="UniProtKB-ARBA"/>
</dbReference>
<dbReference type="CDD" id="cd00761">
    <property type="entry name" value="Glyco_tranf_GTA_type"/>
    <property type="match status" value="1"/>
</dbReference>
<dbReference type="Gene3D" id="3.90.550.10">
    <property type="entry name" value="Spore Coat Polysaccharide Biosynthesis Protein SpsA, Chain A"/>
    <property type="match status" value="2"/>
</dbReference>
<dbReference type="InterPro" id="IPR001173">
    <property type="entry name" value="Glyco_trans_2-like"/>
</dbReference>
<dbReference type="InterPro" id="IPR029044">
    <property type="entry name" value="Nucleotide-diphossugar_trans"/>
</dbReference>
<dbReference type="PANTHER" id="PTHR22916">
    <property type="entry name" value="GLYCOSYLTRANSFERASE"/>
    <property type="match status" value="1"/>
</dbReference>
<dbReference type="PANTHER" id="PTHR22916:SF3">
    <property type="entry name" value="UDP-GLCNAC:BETAGAL BETA-1,3-N-ACETYLGLUCOSAMINYLTRANSFERASE-LIKE PROTEIN 1"/>
    <property type="match status" value="1"/>
</dbReference>
<dbReference type="Pfam" id="PF00535">
    <property type="entry name" value="Glycos_transf_2"/>
    <property type="match status" value="2"/>
</dbReference>
<dbReference type="SUPFAM" id="SSF53448">
    <property type="entry name" value="Nucleotide-diphospho-sugar transferases"/>
    <property type="match status" value="2"/>
</dbReference>
<comment type="similarity">
    <text evidence="1">Belongs to the glycosyltransferase 2 family.</text>
</comment>
<sequence length="602" mass="68869">MITKKDKPLNIYCPLVSIIIPVYNGANYMREAIDSALAQTYENIEIVVVNDGSKDNGETENVALSYGDKIRYFHKENGGCGSALNYGIKNMKGEYFSWLSHDDIYYPNKIEHQVNILNKLDNKDTIIYGGYELIDEKGSSLRYIKPDSVLPINKLNISLLPLLRGLIHGCSLLIPAKYFHEIGIFNEALPTTQDYDLWFKILRVAPIHFDESILIKSRFHSEQGSKKISNHNEECNVLWSSFLHELTEEEMIKMEDSPYLFLTRTATFLSNNTPYKKACDLANTMAKQVLHDTKVSVIIPVYNRINWAIEAIESVLIQTHKNFEILIIDDGSTDDISELTSICKKDKRIRYFHKKNEGPAAARNLGIKNAIGKYIAFLDSDDLFYKDKIEIQLKFMEENNFIFSHTSYQKINEKGKYIESVHSGFFSGNVFPQIIQTCPIAMPTVMGTLTLFQENLFPENIRSGEDCCLWISIASKNSIGGIDKELSKVRISGGTNTFMDPNKYSVGLINITSYVLNDPYLSKFSPFTINLLLAAVTQLRLLENKDYKKSNISFFNNNYVIQKIQTYCFVTKILILLTITSIRQEGIRATISRIQRWLRKHI</sequence>
<gene>
    <name type="ordered locus">RF_0543</name>
</gene>
<accession>Q4UM29</accession>
<organism>
    <name type="scientific">Rickettsia felis (strain ATCC VR-1525 / URRWXCal2)</name>
    <name type="common">Rickettsia azadi</name>
    <dbReference type="NCBI Taxonomy" id="315456"/>
    <lineage>
        <taxon>Bacteria</taxon>
        <taxon>Pseudomonadati</taxon>
        <taxon>Pseudomonadota</taxon>
        <taxon>Alphaproteobacteria</taxon>
        <taxon>Rickettsiales</taxon>
        <taxon>Rickettsiaceae</taxon>
        <taxon>Rickettsieae</taxon>
        <taxon>Rickettsia</taxon>
        <taxon>spotted fever group</taxon>
    </lineage>
</organism>
<feature type="chain" id="PRO_0000268853" description="Uncharacterized glycosyltransferase RF_0543">
    <location>
        <begin position="1"/>
        <end position="602"/>
    </location>
</feature>
<keyword id="KW-0328">Glycosyltransferase</keyword>
<keyword id="KW-0808">Transferase</keyword>
<protein>
    <recommendedName>
        <fullName>Uncharacterized glycosyltransferase RF_0543</fullName>
        <ecNumber>2.4.-.-</ecNumber>
    </recommendedName>
</protein>